<evidence type="ECO:0000255" key="1">
    <source>
        <dbReference type="HAMAP-Rule" id="MF_00039"/>
    </source>
</evidence>
<keyword id="KW-0067">ATP-binding</keyword>
<keyword id="KW-0418">Kinase</keyword>
<keyword id="KW-0547">Nucleotide-binding</keyword>
<keyword id="KW-1185">Reference proteome</keyword>
<keyword id="KW-0690">Ribosome biogenesis</keyword>
<keyword id="KW-0698">rRNA processing</keyword>
<keyword id="KW-0808">Transferase</keyword>
<feature type="chain" id="PRO_0000153911" description="Putative adenylate kinase">
    <location>
        <begin position="1"/>
        <end position="194"/>
    </location>
</feature>
<feature type="region of interest" description="NMP" evidence="1">
    <location>
        <begin position="36"/>
        <end position="59"/>
    </location>
</feature>
<feature type="region of interest" description="LID" evidence="1">
    <location>
        <begin position="108"/>
        <end position="118"/>
    </location>
</feature>
<feature type="binding site" evidence="1">
    <location>
        <position position="16"/>
    </location>
    <ligand>
        <name>ATP</name>
        <dbReference type="ChEBI" id="CHEBI:30616"/>
    </ligand>
</feature>
<feature type="binding site" evidence="1">
    <location>
        <position position="18"/>
    </location>
    <ligand>
        <name>ATP</name>
        <dbReference type="ChEBI" id="CHEBI:30616"/>
    </ligand>
</feature>
<feature type="binding site" evidence="1">
    <location>
        <position position="19"/>
    </location>
    <ligand>
        <name>ATP</name>
        <dbReference type="ChEBI" id="CHEBI:30616"/>
    </ligand>
</feature>
<feature type="binding site" evidence="1">
    <location>
        <position position="20"/>
    </location>
    <ligand>
        <name>ATP</name>
        <dbReference type="ChEBI" id="CHEBI:30616"/>
    </ligand>
</feature>
<feature type="binding site" evidence="1">
    <location>
        <position position="21"/>
    </location>
    <ligand>
        <name>ATP</name>
        <dbReference type="ChEBI" id="CHEBI:30616"/>
    </ligand>
</feature>
<feature type="binding site" evidence="1">
    <location>
        <position position="109"/>
    </location>
    <ligand>
        <name>ATP</name>
        <dbReference type="ChEBI" id="CHEBI:30616"/>
    </ligand>
</feature>
<comment type="function">
    <text evidence="1">Broad-specificity nucleoside monophosphate (NMP) kinase that catalyzes the reversible transfer of the terminal phosphate group between nucleoside triphosphates and monophosphates. Also has ATPase activity. Involved in the late maturation steps of the 30S ribosomal particles, specifically 16S rRNA maturation. While NMP activity is not required for ribosome maturation, ATPase activity is. Associates transiently with small ribosomal subunit protein uS11. ATP hydrolysis breaks the interaction with uS11. May temporarily remove uS11 from the ribosome to enable a conformational change of the ribosomal RNA that is needed for the final maturation step of the small ribosomal subunit.</text>
</comment>
<comment type="catalytic activity">
    <reaction evidence="1">
        <text>AMP + ATP = 2 ADP</text>
        <dbReference type="Rhea" id="RHEA:12973"/>
        <dbReference type="ChEBI" id="CHEBI:30616"/>
        <dbReference type="ChEBI" id="CHEBI:456215"/>
        <dbReference type="ChEBI" id="CHEBI:456216"/>
        <dbReference type="EC" id="2.7.4.3"/>
    </reaction>
</comment>
<comment type="catalytic activity">
    <reaction evidence="1">
        <text>ATP + H2O = ADP + phosphate + H(+)</text>
        <dbReference type="Rhea" id="RHEA:13065"/>
        <dbReference type="ChEBI" id="CHEBI:15377"/>
        <dbReference type="ChEBI" id="CHEBI:15378"/>
        <dbReference type="ChEBI" id="CHEBI:30616"/>
        <dbReference type="ChEBI" id="CHEBI:43474"/>
        <dbReference type="ChEBI" id="CHEBI:456216"/>
    </reaction>
</comment>
<comment type="subunit">
    <text evidence="1">Interacts with uS11. Not a structural component of 40S pre-ribosomes, but transiently interacts with them by binding to uS11.</text>
</comment>
<comment type="similarity">
    <text evidence="1">Belongs to the adenylate kinase family. AK6 subfamily.</text>
</comment>
<protein>
    <recommendedName>
        <fullName evidence="1">Putative adenylate kinase</fullName>
        <shortName evidence="1">AK</shortName>
        <ecNumber evidence="1">2.7.4.3</ecNumber>
    </recommendedName>
    <alternativeName>
        <fullName evidence="1">ATP-AMP transphosphorylase</fullName>
    </alternativeName>
</protein>
<gene>
    <name type="ordered locus">PAE2972</name>
</gene>
<dbReference type="EC" id="2.7.4.3" evidence="1"/>
<dbReference type="EMBL" id="AE009441">
    <property type="protein sequence ID" value="AAL64578.1"/>
    <property type="molecule type" value="Genomic_DNA"/>
</dbReference>
<dbReference type="RefSeq" id="WP_011009046.1">
    <property type="nucleotide sequence ID" value="NC_003364.1"/>
</dbReference>
<dbReference type="SMR" id="Q8ZU30"/>
<dbReference type="FunCoup" id="Q8ZU30">
    <property type="interactions" value="164"/>
</dbReference>
<dbReference type="STRING" id="178306.PAE2972"/>
<dbReference type="EnsemblBacteria" id="AAL64578">
    <property type="protein sequence ID" value="AAL64578"/>
    <property type="gene ID" value="PAE2972"/>
</dbReference>
<dbReference type="GeneID" id="1463743"/>
<dbReference type="KEGG" id="pai:PAE2972"/>
<dbReference type="PATRIC" id="fig|178306.9.peg.2229"/>
<dbReference type="eggNOG" id="arCOG01038">
    <property type="taxonomic scope" value="Archaea"/>
</dbReference>
<dbReference type="HOGENOM" id="CLU_079096_0_0_2"/>
<dbReference type="InParanoid" id="Q8ZU30"/>
<dbReference type="Proteomes" id="UP000002439">
    <property type="component" value="Chromosome"/>
</dbReference>
<dbReference type="GO" id="GO:0004017">
    <property type="term" value="F:adenylate kinase activity"/>
    <property type="evidence" value="ECO:0007669"/>
    <property type="project" value="UniProtKB-UniRule"/>
</dbReference>
<dbReference type="GO" id="GO:0005524">
    <property type="term" value="F:ATP binding"/>
    <property type="evidence" value="ECO:0007669"/>
    <property type="project" value="UniProtKB-UniRule"/>
</dbReference>
<dbReference type="GO" id="GO:0016887">
    <property type="term" value="F:ATP hydrolysis activity"/>
    <property type="evidence" value="ECO:0007669"/>
    <property type="project" value="InterPro"/>
</dbReference>
<dbReference type="GO" id="GO:0042274">
    <property type="term" value="P:ribosomal small subunit biogenesis"/>
    <property type="evidence" value="ECO:0007669"/>
    <property type="project" value="UniProtKB-UniRule"/>
</dbReference>
<dbReference type="GO" id="GO:0006364">
    <property type="term" value="P:rRNA processing"/>
    <property type="evidence" value="ECO:0007669"/>
    <property type="project" value="UniProtKB-KW"/>
</dbReference>
<dbReference type="Gene3D" id="3.40.50.300">
    <property type="entry name" value="P-loop containing nucleotide triphosphate hydrolases"/>
    <property type="match status" value="1"/>
</dbReference>
<dbReference type="HAMAP" id="MF_00039">
    <property type="entry name" value="Adenylate_kinase_AK6"/>
    <property type="match status" value="1"/>
</dbReference>
<dbReference type="InterPro" id="IPR020618">
    <property type="entry name" value="Adenyl_kinase_AK6"/>
</dbReference>
<dbReference type="InterPro" id="IPR027417">
    <property type="entry name" value="P-loop_NTPase"/>
</dbReference>
<dbReference type="PANTHER" id="PTHR12595:SF0">
    <property type="entry name" value="ADENYLATE KINASE ISOENZYME 6"/>
    <property type="match status" value="1"/>
</dbReference>
<dbReference type="PANTHER" id="PTHR12595">
    <property type="entry name" value="POS9-ACTIVATING FACTOR FAP7-RELATED"/>
    <property type="match status" value="1"/>
</dbReference>
<dbReference type="Pfam" id="PF13238">
    <property type="entry name" value="AAA_18"/>
    <property type="match status" value="1"/>
</dbReference>
<dbReference type="SUPFAM" id="SSF52540">
    <property type="entry name" value="P-loop containing nucleoside triphosphate hydrolases"/>
    <property type="match status" value="1"/>
</dbReference>
<reference key="1">
    <citation type="journal article" date="2002" name="Proc. Natl. Acad. Sci. U.S.A.">
        <title>Genome sequence of the hyperthermophilic crenarchaeon Pyrobaculum aerophilum.</title>
        <authorList>
            <person name="Fitz-Gibbon S.T."/>
            <person name="Ladner H."/>
            <person name="Kim U.-J."/>
            <person name="Stetter K.O."/>
            <person name="Simon M.I."/>
            <person name="Miller J.H."/>
        </authorList>
    </citation>
    <scope>NUCLEOTIDE SEQUENCE [LARGE SCALE GENOMIC DNA]</scope>
    <source>
        <strain>ATCC 51768 / DSM 7523 / JCM 9630 / CIP 104966 / NBRC 100827 / IM2</strain>
    </source>
</reference>
<sequence length="194" mass="21893">MFDARRPKALITGTPGVGKTTHCRKLAAFLNTKCISVGELLAGTPYVTYIPELDTYEIVDLDGAVKRVHSVVEPGHIIDTHVVELVPDPEVVIVLRKAPDVLFAELKRRGWPLKKILDNVWAEILDVVLIKARERWGEVAQIDVTRRRPEETFELLKKCVAGGRCHSDVVDWLGYSEESGFLEFIERLSRSESF</sequence>
<organism>
    <name type="scientific">Pyrobaculum aerophilum (strain ATCC 51768 / DSM 7523 / JCM 9630 / CIP 104966 / NBRC 100827 / IM2)</name>
    <dbReference type="NCBI Taxonomy" id="178306"/>
    <lineage>
        <taxon>Archaea</taxon>
        <taxon>Thermoproteota</taxon>
        <taxon>Thermoprotei</taxon>
        <taxon>Thermoproteales</taxon>
        <taxon>Thermoproteaceae</taxon>
        <taxon>Pyrobaculum</taxon>
    </lineage>
</organism>
<name>KAD6_PYRAE</name>
<accession>Q8ZU30</accession>
<proteinExistence type="inferred from homology"/>